<accession>Q92619</accession>
<accession>B4DTS4</accession>
<accession>F6QP70</accession>
<accession>Q6P189</accession>
<accession>Q7LE26</accession>
<accession>Q86WS1</accession>
<accession>Q8HX84</accession>
<accession>Q9GJN9</accession>
<accession>Q9GJP0</accession>
<accession>Q9GJP1</accession>
<accession>Q9MY24</accession>
<dbReference type="EMBL" id="AF308066">
    <property type="protein sequence ID" value="AAN04658.1"/>
    <property type="molecule type" value="Genomic_DNA"/>
</dbReference>
<dbReference type="EMBL" id="AF308045">
    <property type="protein sequence ID" value="AAN04658.1"/>
    <property type="status" value="JOINED"/>
    <property type="molecule type" value="Genomic_DNA"/>
</dbReference>
<dbReference type="EMBL" id="AF308046">
    <property type="protein sequence ID" value="AAN04658.1"/>
    <property type="status" value="JOINED"/>
    <property type="molecule type" value="Genomic_DNA"/>
</dbReference>
<dbReference type="EMBL" id="AF308047">
    <property type="protein sequence ID" value="AAN04658.1"/>
    <property type="status" value="JOINED"/>
    <property type="molecule type" value="Genomic_DNA"/>
</dbReference>
<dbReference type="EMBL" id="AF308048">
    <property type="protein sequence ID" value="AAN04658.1"/>
    <property type="status" value="JOINED"/>
    <property type="molecule type" value="Genomic_DNA"/>
</dbReference>
<dbReference type="EMBL" id="AF308049">
    <property type="protein sequence ID" value="AAN04658.1"/>
    <property type="status" value="JOINED"/>
    <property type="molecule type" value="Genomic_DNA"/>
</dbReference>
<dbReference type="EMBL" id="AF308050">
    <property type="protein sequence ID" value="AAN04658.1"/>
    <property type="status" value="JOINED"/>
    <property type="molecule type" value="Genomic_DNA"/>
</dbReference>
<dbReference type="EMBL" id="AF308051">
    <property type="protein sequence ID" value="AAN04658.1"/>
    <property type="status" value="JOINED"/>
    <property type="molecule type" value="Genomic_DNA"/>
</dbReference>
<dbReference type="EMBL" id="AF308052">
    <property type="protein sequence ID" value="AAN04658.1"/>
    <property type="status" value="JOINED"/>
    <property type="molecule type" value="Genomic_DNA"/>
</dbReference>
<dbReference type="EMBL" id="AF308053">
    <property type="protein sequence ID" value="AAN04658.1"/>
    <property type="status" value="JOINED"/>
    <property type="molecule type" value="Genomic_DNA"/>
</dbReference>
<dbReference type="EMBL" id="AF308054">
    <property type="protein sequence ID" value="AAN04658.1"/>
    <property type="status" value="JOINED"/>
    <property type="molecule type" value="Genomic_DNA"/>
</dbReference>
<dbReference type="EMBL" id="AF308055">
    <property type="protein sequence ID" value="AAN04658.1"/>
    <property type="status" value="JOINED"/>
    <property type="molecule type" value="Genomic_DNA"/>
</dbReference>
<dbReference type="EMBL" id="AF308056">
    <property type="protein sequence ID" value="AAN04658.1"/>
    <property type="status" value="JOINED"/>
    <property type="molecule type" value="Genomic_DNA"/>
</dbReference>
<dbReference type="EMBL" id="AF308057">
    <property type="protein sequence ID" value="AAN04658.1"/>
    <property type="status" value="JOINED"/>
    <property type="molecule type" value="Genomic_DNA"/>
</dbReference>
<dbReference type="EMBL" id="AF308058">
    <property type="protein sequence ID" value="AAN04658.1"/>
    <property type="status" value="JOINED"/>
    <property type="molecule type" value="Genomic_DNA"/>
</dbReference>
<dbReference type="EMBL" id="AF308059">
    <property type="protein sequence ID" value="AAN04658.1"/>
    <property type="status" value="JOINED"/>
    <property type="molecule type" value="Genomic_DNA"/>
</dbReference>
<dbReference type="EMBL" id="AF308060">
    <property type="protein sequence ID" value="AAN04658.1"/>
    <property type="status" value="JOINED"/>
    <property type="molecule type" value="Genomic_DNA"/>
</dbReference>
<dbReference type="EMBL" id="AF308061">
    <property type="protein sequence ID" value="AAN04658.1"/>
    <property type="status" value="JOINED"/>
    <property type="molecule type" value="Genomic_DNA"/>
</dbReference>
<dbReference type="EMBL" id="AF308062">
    <property type="protein sequence ID" value="AAN04658.1"/>
    <property type="status" value="JOINED"/>
    <property type="molecule type" value="Genomic_DNA"/>
</dbReference>
<dbReference type="EMBL" id="AF308063">
    <property type="protein sequence ID" value="AAN04658.1"/>
    <property type="status" value="JOINED"/>
    <property type="molecule type" value="Genomic_DNA"/>
</dbReference>
<dbReference type="EMBL" id="AF308064">
    <property type="protein sequence ID" value="AAN04658.1"/>
    <property type="status" value="JOINED"/>
    <property type="molecule type" value="Genomic_DNA"/>
</dbReference>
<dbReference type="EMBL" id="AF308065">
    <property type="protein sequence ID" value="AAN04658.1"/>
    <property type="status" value="JOINED"/>
    <property type="molecule type" value="Genomic_DNA"/>
</dbReference>
<dbReference type="EMBL" id="AF311102">
    <property type="protein sequence ID" value="AAN04658.1"/>
    <property type="status" value="JOINED"/>
    <property type="molecule type" value="Genomic_DNA"/>
</dbReference>
<dbReference type="EMBL" id="D86976">
    <property type="protein sequence ID" value="BAA13212.1"/>
    <property type="status" value="ALT_INIT"/>
    <property type="molecule type" value="mRNA"/>
</dbReference>
<dbReference type="EMBL" id="AK300341">
    <property type="protein sequence ID" value="BAG62086.1"/>
    <property type="molecule type" value="mRNA"/>
</dbReference>
<dbReference type="EMBL" id="AC004151">
    <property type="protein sequence ID" value="AAC03237.1"/>
    <property type="molecule type" value="Genomic_DNA"/>
</dbReference>
<dbReference type="EMBL" id="AC011558">
    <property type="status" value="NOT_ANNOTATED_CDS"/>
    <property type="molecule type" value="Genomic_DNA"/>
</dbReference>
<dbReference type="EMBL" id="AC093066">
    <property type="status" value="NOT_ANNOTATED_CDS"/>
    <property type="molecule type" value="Genomic_DNA"/>
</dbReference>
<dbReference type="EMBL" id="CH471139">
    <property type="protein sequence ID" value="EAW69551.1"/>
    <property type="molecule type" value="Genomic_DNA"/>
</dbReference>
<dbReference type="EMBL" id="BC048129">
    <property type="protein sequence ID" value="AAH48129.1"/>
    <property type="molecule type" value="mRNA"/>
</dbReference>
<dbReference type="EMBL" id="BC065223">
    <property type="protein sequence ID" value="AAH65223.1"/>
    <property type="molecule type" value="mRNA"/>
</dbReference>
<dbReference type="EMBL" id="AF207595">
    <property type="protein sequence ID" value="AAG02014.1"/>
    <property type="molecule type" value="Genomic_DNA"/>
</dbReference>
<dbReference type="EMBL" id="AF207596">
    <property type="protein sequence ID" value="AAG02015.1"/>
    <property type="molecule type" value="Genomic_DNA"/>
</dbReference>
<dbReference type="EMBL" id="AF207597">
    <property type="protein sequence ID" value="AAG02016.1"/>
    <property type="molecule type" value="Genomic_DNA"/>
</dbReference>
<dbReference type="EMBL" id="AF236756">
    <property type="protein sequence ID" value="AAF91292.1"/>
    <property type="molecule type" value="Genomic_DNA"/>
</dbReference>
<dbReference type="CCDS" id="CCDS32863.1">
    <molecule id="Q92619-1"/>
</dbReference>
<dbReference type="CCDS" id="CCDS58637.1">
    <molecule id="Q92619-2"/>
</dbReference>
<dbReference type="PIR" id="D59433">
    <property type="entry name" value="D59433"/>
</dbReference>
<dbReference type="RefSeq" id="NP_001245257.1">
    <molecule id="Q92619-2"/>
    <property type="nucleotide sequence ID" value="NM_001258328.4"/>
</dbReference>
<dbReference type="RefSeq" id="NP_001269263.1">
    <property type="nucleotide sequence ID" value="NM_001282334.1"/>
</dbReference>
<dbReference type="RefSeq" id="NP_001269264.1">
    <property type="nucleotide sequence ID" value="NM_001282335.1"/>
</dbReference>
<dbReference type="RefSeq" id="NP_036424.2">
    <molecule id="Q92619-1"/>
    <property type="nucleotide sequence ID" value="NM_012292.4"/>
</dbReference>
<dbReference type="RefSeq" id="XP_047294504.1">
    <molecule id="Q92619-1"/>
    <property type="nucleotide sequence ID" value="XM_047438548.1"/>
</dbReference>
<dbReference type="PDB" id="3D25">
    <property type="method" value="X-ray"/>
    <property type="resolution" value="1.30 A"/>
    <property type="chains" value="C=140-145"/>
</dbReference>
<dbReference type="PDB" id="3FT3">
    <property type="method" value="X-ray"/>
    <property type="resolution" value="1.95 A"/>
    <property type="chains" value="P=137-145"/>
</dbReference>
<dbReference type="PDBsum" id="3D25"/>
<dbReference type="PDBsum" id="3FT3"/>
<dbReference type="SMR" id="Q92619"/>
<dbReference type="BioGRID" id="117072">
    <property type="interactions" value="27"/>
</dbReference>
<dbReference type="FunCoup" id="Q92619">
    <property type="interactions" value="435"/>
</dbReference>
<dbReference type="IntAct" id="Q92619">
    <property type="interactions" value="20"/>
</dbReference>
<dbReference type="STRING" id="9606.ENSP00000439601"/>
<dbReference type="GlyCosmos" id="Q92619">
    <property type="glycosylation" value="2 sites, 2 glycans"/>
</dbReference>
<dbReference type="GlyGen" id="Q92619">
    <property type="glycosylation" value="2 sites, 2 O-linked glycans (2 sites)"/>
</dbReference>
<dbReference type="iPTMnet" id="Q92619"/>
<dbReference type="PhosphoSitePlus" id="Q92619"/>
<dbReference type="SwissPalm" id="Q92619"/>
<dbReference type="BioMuta" id="ARHGAP45"/>
<dbReference type="DMDM" id="187471158"/>
<dbReference type="jPOST" id="Q92619"/>
<dbReference type="MassIVE" id="Q92619"/>
<dbReference type="PaxDb" id="9606-ENSP00000439601"/>
<dbReference type="PeptideAtlas" id="Q92619"/>
<dbReference type="ProteomicsDB" id="27852"/>
<dbReference type="ProteomicsDB" id="75372">
    <molecule id="Q92619-1"/>
</dbReference>
<dbReference type="Pumba" id="Q92619"/>
<dbReference type="Antibodypedia" id="10356">
    <property type="antibodies" value="185 antibodies from 32 providers"/>
</dbReference>
<dbReference type="DNASU" id="23526"/>
<dbReference type="Ensembl" id="ENST00000313093.7">
    <molecule id="Q92619-1"/>
    <property type="protein sequence ID" value="ENSP00000316772.2"/>
    <property type="gene ID" value="ENSG00000180448.11"/>
</dbReference>
<dbReference type="Ensembl" id="ENST00000539243.6">
    <molecule id="Q92619-2"/>
    <property type="protein sequence ID" value="ENSP00000439601.1"/>
    <property type="gene ID" value="ENSG00000180448.11"/>
</dbReference>
<dbReference type="GeneID" id="23526"/>
<dbReference type="KEGG" id="hsa:23526"/>
<dbReference type="MANE-Select" id="ENST00000313093.7">
    <property type="protein sequence ID" value="ENSP00000316772.2"/>
    <property type="RefSeq nucleotide sequence ID" value="NM_012292.5"/>
    <property type="RefSeq protein sequence ID" value="NP_036424.2"/>
</dbReference>
<dbReference type="UCSC" id="uc002lqz.4">
    <molecule id="Q92619-1"/>
    <property type="organism name" value="human"/>
</dbReference>
<dbReference type="AGR" id="HGNC:17102"/>
<dbReference type="CTD" id="23526"/>
<dbReference type="DisGeNET" id="23526"/>
<dbReference type="GeneCards" id="ARHGAP45"/>
<dbReference type="HGNC" id="HGNC:17102">
    <property type="gene designation" value="ARHGAP45"/>
</dbReference>
<dbReference type="HPA" id="ENSG00000180448">
    <property type="expression patterns" value="Group enriched (bone marrow, intestine, lung, lymphoid tissue)"/>
</dbReference>
<dbReference type="MalaCards" id="ARHGAP45"/>
<dbReference type="MIM" id="601155">
    <property type="type" value="gene"/>
</dbReference>
<dbReference type="neXtProt" id="NX_Q92619"/>
<dbReference type="OpenTargets" id="ENSG00000180448"/>
<dbReference type="PharmGKB" id="PA128394633"/>
<dbReference type="VEuPathDB" id="HostDB:ENSG00000180448"/>
<dbReference type="eggNOG" id="KOG1453">
    <property type="taxonomic scope" value="Eukaryota"/>
</dbReference>
<dbReference type="GeneTree" id="ENSGT00950000183110"/>
<dbReference type="HOGENOM" id="CLU_006236_0_1_1"/>
<dbReference type="InParanoid" id="Q92619"/>
<dbReference type="OMA" id="PLACLCR"/>
<dbReference type="OrthoDB" id="79452at2759"/>
<dbReference type="PAN-GO" id="Q92619">
    <property type="GO annotations" value="3 GO annotations based on evolutionary models"/>
</dbReference>
<dbReference type="PhylomeDB" id="Q92619"/>
<dbReference type="TreeFam" id="TF351450"/>
<dbReference type="PathwayCommons" id="Q92619"/>
<dbReference type="Reactome" id="R-HSA-6798695">
    <property type="pathway name" value="Neutrophil degranulation"/>
</dbReference>
<dbReference type="Reactome" id="R-HSA-8980692">
    <property type="pathway name" value="RHOA GTPase cycle"/>
</dbReference>
<dbReference type="Reactome" id="R-HSA-9013148">
    <property type="pathway name" value="CDC42 GTPase cycle"/>
</dbReference>
<dbReference type="Reactome" id="R-HSA-9013149">
    <property type="pathway name" value="RAC1 GTPase cycle"/>
</dbReference>
<dbReference type="SignaLink" id="Q92619"/>
<dbReference type="BioGRID-ORCS" id="23526">
    <property type="hits" value="44 hits in 1160 CRISPR screens"/>
</dbReference>
<dbReference type="ChiTaRS" id="ARHGAP45">
    <property type="organism name" value="human"/>
</dbReference>
<dbReference type="EvolutionaryTrace" id="Q92619"/>
<dbReference type="GeneWiki" id="HMHA1"/>
<dbReference type="GenomeRNAi" id="23526"/>
<dbReference type="Pharos" id="Q92619">
    <property type="development level" value="Tbio"/>
</dbReference>
<dbReference type="PRO" id="PR:Q92619"/>
<dbReference type="Proteomes" id="UP000005640">
    <property type="component" value="Chromosome 19"/>
</dbReference>
<dbReference type="RNAct" id="Q92619">
    <property type="molecule type" value="protein"/>
</dbReference>
<dbReference type="Bgee" id="ENSG00000180448">
    <property type="expression patterns" value="Expressed in granulocyte and 158 other cell types or tissues"/>
</dbReference>
<dbReference type="ExpressionAtlas" id="Q92619">
    <property type="expression patterns" value="baseline and differential"/>
</dbReference>
<dbReference type="GO" id="GO:0035578">
    <property type="term" value="C:azurophil granule lumen"/>
    <property type="evidence" value="ECO:0000304"/>
    <property type="project" value="Reactome"/>
</dbReference>
<dbReference type="GO" id="GO:0005829">
    <property type="term" value="C:cytosol"/>
    <property type="evidence" value="ECO:0000314"/>
    <property type="project" value="HPA"/>
</dbReference>
<dbReference type="GO" id="GO:0005576">
    <property type="term" value="C:extracellular region"/>
    <property type="evidence" value="ECO:0000304"/>
    <property type="project" value="Reactome"/>
</dbReference>
<dbReference type="GO" id="GO:0016020">
    <property type="term" value="C:membrane"/>
    <property type="evidence" value="ECO:0007005"/>
    <property type="project" value="UniProtKB"/>
</dbReference>
<dbReference type="GO" id="GO:0005886">
    <property type="term" value="C:plasma membrane"/>
    <property type="evidence" value="ECO:0000314"/>
    <property type="project" value="HPA"/>
</dbReference>
<dbReference type="GO" id="GO:0032587">
    <property type="term" value="C:ruffle membrane"/>
    <property type="evidence" value="ECO:0007669"/>
    <property type="project" value="UniProtKB-SubCell"/>
</dbReference>
<dbReference type="GO" id="GO:0034774">
    <property type="term" value="C:secretory granule lumen"/>
    <property type="evidence" value="ECO:0000304"/>
    <property type="project" value="Reactome"/>
</dbReference>
<dbReference type="GO" id="GO:0005096">
    <property type="term" value="F:GTPase activator activity"/>
    <property type="evidence" value="ECO:0000318"/>
    <property type="project" value="GO_Central"/>
</dbReference>
<dbReference type="GO" id="GO:0008270">
    <property type="term" value="F:zinc ion binding"/>
    <property type="evidence" value="ECO:0007669"/>
    <property type="project" value="UniProtKB-KW"/>
</dbReference>
<dbReference type="GO" id="GO:0051058">
    <property type="term" value="P:negative regulation of small GTPase mediated signal transduction"/>
    <property type="evidence" value="ECO:0000318"/>
    <property type="project" value="GO_Central"/>
</dbReference>
<dbReference type="GO" id="GO:0051056">
    <property type="term" value="P:regulation of small GTPase mediated signal transduction"/>
    <property type="evidence" value="ECO:0000304"/>
    <property type="project" value="Reactome"/>
</dbReference>
<dbReference type="GO" id="GO:0007165">
    <property type="term" value="P:signal transduction"/>
    <property type="evidence" value="ECO:0007669"/>
    <property type="project" value="InterPro"/>
</dbReference>
<dbReference type="CDD" id="cd20816">
    <property type="entry name" value="C1_GMIP-like"/>
    <property type="match status" value="1"/>
</dbReference>
<dbReference type="FunFam" id="1.10.555.10:FF:000016">
    <property type="entry name" value="Rho GTPase activating protein 29"/>
    <property type="match status" value="1"/>
</dbReference>
<dbReference type="FunFam" id="1.20.1270.60:FF:000058">
    <property type="entry name" value="Rho GTPase activating protein 45"/>
    <property type="match status" value="1"/>
</dbReference>
<dbReference type="Gene3D" id="1.20.1270.60">
    <property type="entry name" value="Arfaptin homology (AH) domain/BAR domain"/>
    <property type="match status" value="1"/>
</dbReference>
<dbReference type="Gene3D" id="1.10.555.10">
    <property type="entry name" value="Rho GTPase activation protein"/>
    <property type="match status" value="1"/>
</dbReference>
<dbReference type="InterPro" id="IPR027267">
    <property type="entry name" value="AH/BAR_dom_sf"/>
</dbReference>
<dbReference type="InterPro" id="IPR046349">
    <property type="entry name" value="C1-like_sf"/>
</dbReference>
<dbReference type="InterPro" id="IPR031160">
    <property type="entry name" value="F_BAR"/>
</dbReference>
<dbReference type="InterPro" id="IPR001060">
    <property type="entry name" value="FCH_dom"/>
</dbReference>
<dbReference type="InterPro" id="IPR054713">
    <property type="entry name" value="GMIP/FCHO2-like_FCH"/>
</dbReference>
<dbReference type="InterPro" id="IPR002219">
    <property type="entry name" value="PE/DAG-bd"/>
</dbReference>
<dbReference type="InterPro" id="IPR057028">
    <property type="entry name" value="RHG29_45_N"/>
</dbReference>
<dbReference type="InterPro" id="IPR008936">
    <property type="entry name" value="Rho_GTPase_activation_prot"/>
</dbReference>
<dbReference type="InterPro" id="IPR051025">
    <property type="entry name" value="RhoGAP"/>
</dbReference>
<dbReference type="InterPro" id="IPR000198">
    <property type="entry name" value="RhoGAP_dom"/>
</dbReference>
<dbReference type="PANTHER" id="PTHR15228:SF18">
    <property type="entry name" value="RHO GTPASE-ACTIVATING PROTEIN 45"/>
    <property type="match status" value="1"/>
</dbReference>
<dbReference type="PANTHER" id="PTHR15228">
    <property type="entry name" value="SPERMATHECAL PHYSIOLOGY VARIANT"/>
    <property type="match status" value="1"/>
</dbReference>
<dbReference type="Pfam" id="PF22699">
    <property type="entry name" value="GMIP-like_FCH"/>
    <property type="match status" value="1"/>
</dbReference>
<dbReference type="Pfam" id="PF24235">
    <property type="entry name" value="RHG29_45_N"/>
    <property type="match status" value="1"/>
</dbReference>
<dbReference type="Pfam" id="PF00620">
    <property type="entry name" value="RhoGAP"/>
    <property type="match status" value="1"/>
</dbReference>
<dbReference type="SMART" id="SM00109">
    <property type="entry name" value="C1"/>
    <property type="match status" value="1"/>
</dbReference>
<dbReference type="SMART" id="SM00055">
    <property type="entry name" value="FCH"/>
    <property type="match status" value="1"/>
</dbReference>
<dbReference type="SMART" id="SM00324">
    <property type="entry name" value="RhoGAP"/>
    <property type="match status" value="1"/>
</dbReference>
<dbReference type="SUPFAM" id="SSF103657">
    <property type="entry name" value="BAR/IMD domain-like"/>
    <property type="match status" value="1"/>
</dbReference>
<dbReference type="SUPFAM" id="SSF57889">
    <property type="entry name" value="Cysteine-rich domain"/>
    <property type="match status" value="1"/>
</dbReference>
<dbReference type="SUPFAM" id="SSF48350">
    <property type="entry name" value="GTPase activation domain, GAP"/>
    <property type="match status" value="1"/>
</dbReference>
<dbReference type="PROSITE" id="PS51741">
    <property type="entry name" value="F_BAR"/>
    <property type="match status" value="1"/>
</dbReference>
<dbReference type="PROSITE" id="PS50238">
    <property type="entry name" value="RHOGAP"/>
    <property type="match status" value="1"/>
</dbReference>
<dbReference type="PROSITE" id="PS00479">
    <property type="entry name" value="ZF_DAG_PE_1"/>
    <property type="match status" value="1"/>
</dbReference>
<dbReference type="PROSITE" id="PS50081">
    <property type="entry name" value="ZF_DAG_PE_2"/>
    <property type="match status" value="1"/>
</dbReference>
<gene>
    <name evidence="22" type="primary">ARHGAP45</name>
    <name evidence="22" type="synonym">HMHA1</name>
    <name evidence="22" type="synonym">KIAA0223</name>
</gene>
<sequence length="1136" mass="124614">MFSRKKRELMKTPSISKKNRAGSPSPQPSGELPRKDGADAVFPGPSLEPPAGSSGVKATGTLKRPTSLSRHASAAGFPLSGAASWTLGRSHRSPLTAASPGELPTEGAGPDVVEDISHLLADVARFAEGLEKLKECVLRDDLLEARRPRAHECLGEALRVMHQIISKYPLLNTVETLTAAGTLIAKVKAFHYESNNDLEKQEFEKALETIAVAFSSTVSEFLMGEVDSSTLLAVPPGDSSQSMESLYGPGSEGTPPSLEDCDAGCLPAEEVDVLLQRCEGGVDAALLYAKNMAKYMKDLISYLEKRTTLEMEFAKGLQKIAHNCRQSVMQEPHMPLLSIYSLALEQDLEFGHSMVQAVGTLQTQTFMQPLTLRRLEHEKRRKEIKEAWHRAQRKLQEAESNLRKAKQGYVQRCEDHDKARFLVAKAEEEQAGSAPGAGSTATKTLDKRRRLEEEAKNKAEEAMATYRTCVADAKTQKQELEDTKVTALRQIQEVIRQSDQTIKSATISYYQMMHMQTAPLPVHFQMLCESSKLYDPGQQYASHVRQLQRDQEPDVHYDFEPHVSANAWSPVMRARKSSFNVSDVARPEAAGSPPEEGGCTEGTPAKDHRAGRGHQVHKSWPLSISDSDSGLDPGPGAGDFKKFERTSSSGTMSSTEELVDPDGGAGASAFEQADLNGMTPELPVAVPSGPFRHEGLSKAARTHRLRKLRTPAKCRECNSYVYFQGAECEECCLACHKKCLETLAIQCGHKKLQGRLQLFGQDFSHAARSAPDGVPFIVKKCVCEIERRALRTKGIYRVNGVKTRVEKLCQAFENGKELVELSQASPHDISNVLKLYLRQLPEPLISFRLYHELVGLAKDSLKAEAEAKAASRGRQDGSESEAVAVALAGRLRELLRDLPPENRASLQYLLRHLRRIVEVEQDNKMTPGNLGIVFGPTLLRPRPTEATVSLSSLVDYPHQARVIETLIVHYGLVFEEEPEETPGGQDESSNQRAEVVVQVPYLEAGEAVVYPLQEAAADGCRESRVVSNDSDSDLEEASELLSSSEASALGHLSFLEQQQSEASLEVASGSHSGSEEQLEATAREDGDGDEDGPAQQLSGFNTNQSNNVLQAPLPPMRLRGGRMTLGSCRERQPEFV</sequence>
<feature type="chain" id="PRO_0000330312" description="Rho GTPase-activating protein 45">
    <location>
        <begin position="1"/>
        <end position="1136"/>
    </location>
</feature>
<feature type="peptide" id="PRO_0000330313" description="Minor histocompatibility antigen HA-1">
    <location>
        <begin position="137"/>
        <end position="145"/>
    </location>
</feature>
<feature type="domain" description="F-BAR" evidence="5">
    <location>
        <begin position="269"/>
        <end position="539"/>
    </location>
</feature>
<feature type="domain" description="Rho-GAP" evidence="3">
    <location>
        <begin position="761"/>
        <end position="974"/>
    </location>
</feature>
<feature type="zinc finger region" description="Phorbol-ester/DAG-type" evidence="4">
    <location>
        <begin position="702"/>
        <end position="747"/>
    </location>
</feature>
<feature type="region of interest" description="Disordered" evidence="6">
    <location>
        <begin position="1"/>
        <end position="73"/>
    </location>
</feature>
<feature type="region of interest" description="Disordered" evidence="6">
    <location>
        <begin position="91"/>
        <end position="110"/>
    </location>
</feature>
<feature type="region of interest" description="Disordered" evidence="6">
    <location>
        <begin position="583"/>
        <end position="662"/>
    </location>
</feature>
<feature type="region of interest" description="Disordered" evidence="6">
    <location>
        <begin position="1061"/>
        <end position="1136"/>
    </location>
</feature>
<feature type="coiled-coil region" evidence="2">
    <location>
        <begin position="376"/>
        <end position="412"/>
    </location>
</feature>
<feature type="coiled-coil region" evidence="2">
    <location>
        <begin position="440"/>
        <end position="499"/>
    </location>
</feature>
<feature type="compositionally biased region" description="Low complexity" evidence="6">
    <location>
        <begin position="646"/>
        <end position="655"/>
    </location>
</feature>
<feature type="compositionally biased region" description="Polar residues" evidence="6">
    <location>
        <begin position="1095"/>
        <end position="1109"/>
    </location>
</feature>
<feature type="site" description="Arginine finger; crucial for GTP hydrolysis by stabilizing the transition state" evidence="3">
    <location>
        <position position="797"/>
    </location>
</feature>
<feature type="modified residue" description="Phosphoserine" evidence="23 25 26 27">
    <location>
        <position position="23"/>
    </location>
</feature>
<feature type="modified residue" description="Phosphoserine" evidence="23">
    <location>
        <position position="25"/>
    </location>
</feature>
<feature type="modified residue" description="Phosphoserine" evidence="25 26">
    <location>
        <position position="73"/>
    </location>
</feature>
<feature type="modified residue" description="Phosphoserine" evidence="25">
    <location>
        <position position="93"/>
    </location>
</feature>
<feature type="modified residue" description="Phosphoserine" evidence="24 25">
    <location>
        <position position="99"/>
    </location>
</feature>
<feature type="modified residue" description="Phosphoserine" evidence="24 25 26 27">
    <location>
        <position position="569"/>
    </location>
</feature>
<feature type="modified residue" description="Phosphoserine" evidence="27">
    <location>
        <position position="578"/>
    </location>
</feature>
<feature type="modified residue" description="Phosphoserine" evidence="26">
    <location>
        <position position="592"/>
    </location>
</feature>
<feature type="modified residue" description="Phosphoserine" evidence="25 27">
    <location>
        <position position="619"/>
    </location>
</feature>
<feature type="modified residue" description="Phosphoserine" evidence="27">
    <location>
        <position position="949"/>
    </location>
</feature>
<feature type="modified residue" description="Phosphoserine" evidence="1">
    <location>
        <position position="1027"/>
    </location>
</feature>
<feature type="modified residue" description="Phosphoserine" evidence="1">
    <location>
        <position position="1030"/>
    </location>
</feature>
<feature type="modified residue" description="Phosphoserine" evidence="1">
    <location>
        <position position="1032"/>
    </location>
</feature>
<feature type="splice variant" id="VSP_044707" description="In isoform 2." evidence="20">
    <original>MFSRKKRELMKTPSISKKNRAGSPSPQPSG</original>
    <variation>MSRGQRVLKGLLGWVCTWTWAWRARLGARGCGLHVLCPRDLPLPPE</variation>
    <location>
        <begin position="1"/>
        <end position="30"/>
    </location>
</feature>
<feature type="sequence variant" id="VAR_042693" description="In allele HA-1H; induction of CTL recognition for epitope HA-1; dbSNP:rs1801284." evidence="7 10 11 16 18 19">
    <original>R</original>
    <variation>H</variation>
    <location>
        <position position="139"/>
    </location>
</feature>
<feature type="sequence variant" id="VAR_042694" description="In dbSNP:rs2074442." evidence="19">
    <original>E</original>
    <variation>D</variation>
    <location>
        <position position="259"/>
    </location>
</feature>
<feature type="sequence variant" id="VAR_042695" description="In dbSNP:rs7251797." evidence="19">
    <original>S</original>
    <variation>G</variation>
    <location>
        <position position="439"/>
    </location>
</feature>
<feature type="sequence variant" id="VAR_042696" description="In dbSNP:rs36084354.">
    <original>M</original>
    <variation>I</variation>
    <location>
        <position position="515"/>
    </location>
</feature>
<feature type="sequence variant" id="VAR_042697" description="In dbSNP:rs34569196.">
    <original>A</original>
    <variation>P</variation>
    <location>
        <position position="886"/>
    </location>
</feature>
<feature type="sequence conflict" description="In Ref. 3; BAG62086." evidence="21" ref="3">
    <original>S</original>
    <variation>F</variation>
    <location>
        <position position="648"/>
    </location>
</feature>
<evidence type="ECO:0000250" key="1">
    <source>
        <dbReference type="UniProtKB" id="Q3TBD2"/>
    </source>
</evidence>
<evidence type="ECO:0000255" key="2"/>
<evidence type="ECO:0000255" key="3">
    <source>
        <dbReference type="PROSITE-ProRule" id="PRU00172"/>
    </source>
</evidence>
<evidence type="ECO:0000255" key="4">
    <source>
        <dbReference type="PROSITE-ProRule" id="PRU00226"/>
    </source>
</evidence>
<evidence type="ECO:0000255" key="5">
    <source>
        <dbReference type="PROSITE-ProRule" id="PRU01077"/>
    </source>
</evidence>
<evidence type="ECO:0000256" key="6">
    <source>
        <dbReference type="SAM" id="MobiDB-lite"/>
    </source>
</evidence>
<evidence type="ECO:0000269" key="7">
    <source>
    </source>
</evidence>
<evidence type="ECO:0000269" key="8">
    <source>
    </source>
</evidence>
<evidence type="ECO:0000269" key="9">
    <source>
    </source>
</evidence>
<evidence type="ECO:0000269" key="10">
    <source>
    </source>
</evidence>
<evidence type="ECO:0000269" key="11">
    <source>
    </source>
</evidence>
<evidence type="ECO:0000269" key="12">
    <source>
    </source>
</evidence>
<evidence type="ECO:0000269" key="13">
    <source>
    </source>
</evidence>
<evidence type="ECO:0000269" key="14">
    <source>
    </source>
</evidence>
<evidence type="ECO:0000269" key="15">
    <source>
    </source>
</evidence>
<evidence type="ECO:0000269" key="16">
    <source>
    </source>
</evidence>
<evidence type="ECO:0000269" key="17">
    <source>
    </source>
</evidence>
<evidence type="ECO:0000269" key="18">
    <source>
    </source>
</evidence>
<evidence type="ECO:0000269" key="19">
    <source ref="5"/>
</evidence>
<evidence type="ECO:0000303" key="20">
    <source>
    </source>
</evidence>
<evidence type="ECO:0000305" key="21"/>
<evidence type="ECO:0000312" key="22">
    <source>
        <dbReference type="HGNC" id="HGNC:17102"/>
    </source>
</evidence>
<evidence type="ECO:0007744" key="23">
    <source>
    </source>
</evidence>
<evidence type="ECO:0007744" key="24">
    <source>
    </source>
</evidence>
<evidence type="ECO:0007744" key="25">
    <source>
    </source>
</evidence>
<evidence type="ECO:0007744" key="26">
    <source>
    </source>
</evidence>
<evidence type="ECO:0007744" key="27">
    <source>
    </source>
</evidence>
<name>HMHA1_HUMAN</name>
<proteinExistence type="evidence at protein level"/>
<keyword id="KW-0002">3D-structure</keyword>
<keyword id="KW-0025">Alternative splicing</keyword>
<keyword id="KW-1003">Cell membrane</keyword>
<keyword id="KW-0966">Cell projection</keyword>
<keyword id="KW-0175">Coiled coil</keyword>
<keyword id="KW-0963">Cytoplasm</keyword>
<keyword id="KW-0903">Direct protein sequencing</keyword>
<keyword id="KW-0343">GTPase activation</keyword>
<keyword id="KW-0472">Membrane</keyword>
<keyword id="KW-0479">Metal-binding</keyword>
<keyword id="KW-0597">Phosphoprotein</keyword>
<keyword id="KW-1267">Proteomics identification</keyword>
<keyword id="KW-1185">Reference proteome</keyword>
<keyword id="KW-0862">Zinc</keyword>
<keyword id="KW-0863">Zinc-finger</keyword>
<organism>
    <name type="scientific">Homo sapiens</name>
    <name type="common">Human</name>
    <dbReference type="NCBI Taxonomy" id="9606"/>
    <lineage>
        <taxon>Eukaryota</taxon>
        <taxon>Metazoa</taxon>
        <taxon>Chordata</taxon>
        <taxon>Craniata</taxon>
        <taxon>Vertebrata</taxon>
        <taxon>Euteleostomi</taxon>
        <taxon>Mammalia</taxon>
        <taxon>Eutheria</taxon>
        <taxon>Euarchontoglires</taxon>
        <taxon>Primates</taxon>
        <taxon>Haplorrhini</taxon>
        <taxon>Catarrhini</taxon>
        <taxon>Hominidae</taxon>
        <taxon>Homo</taxon>
    </lineage>
</organism>
<reference key="1">
    <citation type="journal article" date="2000" name="Biochem. Biophys. Res. Commun.">
        <title>Genomic organization of the human cholesterol-responsive ABC transporter ABCA7: tandem linkage with the minor histocompatibility antigen HA-1 gene.</title>
        <authorList>
            <person name="Kaminski W.E."/>
            <person name="Piehler A."/>
            <person name="Schmitz G."/>
        </authorList>
    </citation>
    <scope>NUCLEOTIDE SEQUENCE [GENOMIC DNA]</scope>
</reference>
<reference key="2">
    <citation type="journal article" date="1996" name="DNA Res.">
        <title>Prediction of the coding sequences of unidentified human genes. VI. The coding sequences of 80 new genes (KIAA0201-KIAA0280) deduced by analysis of cDNA clones from cell line KG-1 and brain.</title>
        <authorList>
            <person name="Nagase T."/>
            <person name="Seki N."/>
            <person name="Ishikawa K."/>
            <person name="Ohira M."/>
            <person name="Kawarabayasi Y."/>
            <person name="Ohara O."/>
            <person name="Tanaka A."/>
            <person name="Kotani H."/>
            <person name="Miyajima N."/>
            <person name="Nomura N."/>
        </authorList>
    </citation>
    <scope>NUCLEOTIDE SEQUENCE [LARGE SCALE MRNA] (ISOFORM 1)</scope>
    <source>
        <tissue>Bone marrow</tissue>
    </source>
</reference>
<reference key="3">
    <citation type="journal article" date="2004" name="Nat. Genet.">
        <title>Complete sequencing and characterization of 21,243 full-length human cDNAs.</title>
        <authorList>
            <person name="Ota T."/>
            <person name="Suzuki Y."/>
            <person name="Nishikawa T."/>
            <person name="Otsuki T."/>
            <person name="Sugiyama T."/>
            <person name="Irie R."/>
            <person name="Wakamatsu A."/>
            <person name="Hayashi K."/>
            <person name="Sato H."/>
            <person name="Nagai K."/>
            <person name="Kimura K."/>
            <person name="Makita H."/>
            <person name="Sekine M."/>
            <person name="Obayashi M."/>
            <person name="Nishi T."/>
            <person name="Shibahara T."/>
            <person name="Tanaka T."/>
            <person name="Ishii S."/>
            <person name="Yamamoto J."/>
            <person name="Saito K."/>
            <person name="Kawai Y."/>
            <person name="Isono Y."/>
            <person name="Nakamura Y."/>
            <person name="Nagahari K."/>
            <person name="Murakami K."/>
            <person name="Yasuda T."/>
            <person name="Iwayanagi T."/>
            <person name="Wagatsuma M."/>
            <person name="Shiratori A."/>
            <person name="Sudo H."/>
            <person name="Hosoiri T."/>
            <person name="Kaku Y."/>
            <person name="Kodaira H."/>
            <person name="Kondo H."/>
            <person name="Sugawara M."/>
            <person name="Takahashi M."/>
            <person name="Kanda K."/>
            <person name="Yokoi T."/>
            <person name="Furuya T."/>
            <person name="Kikkawa E."/>
            <person name="Omura Y."/>
            <person name="Abe K."/>
            <person name="Kamihara K."/>
            <person name="Katsuta N."/>
            <person name="Sato K."/>
            <person name="Tanikawa M."/>
            <person name="Yamazaki M."/>
            <person name="Ninomiya K."/>
            <person name="Ishibashi T."/>
            <person name="Yamashita H."/>
            <person name="Murakawa K."/>
            <person name="Fujimori K."/>
            <person name="Tanai H."/>
            <person name="Kimata M."/>
            <person name="Watanabe M."/>
            <person name="Hiraoka S."/>
            <person name="Chiba Y."/>
            <person name="Ishida S."/>
            <person name="Ono Y."/>
            <person name="Takiguchi S."/>
            <person name="Watanabe S."/>
            <person name="Yosida M."/>
            <person name="Hotuta T."/>
            <person name="Kusano J."/>
            <person name="Kanehori K."/>
            <person name="Takahashi-Fujii A."/>
            <person name="Hara H."/>
            <person name="Tanase T.-O."/>
            <person name="Nomura Y."/>
            <person name="Togiya S."/>
            <person name="Komai F."/>
            <person name="Hara R."/>
            <person name="Takeuchi K."/>
            <person name="Arita M."/>
            <person name="Imose N."/>
            <person name="Musashino K."/>
            <person name="Yuuki H."/>
            <person name="Oshima A."/>
            <person name="Sasaki N."/>
            <person name="Aotsuka S."/>
            <person name="Yoshikawa Y."/>
            <person name="Matsunawa H."/>
            <person name="Ichihara T."/>
            <person name="Shiohata N."/>
            <person name="Sano S."/>
            <person name="Moriya S."/>
            <person name="Momiyama H."/>
            <person name="Satoh N."/>
            <person name="Takami S."/>
            <person name="Terashima Y."/>
            <person name="Suzuki O."/>
            <person name="Nakagawa S."/>
            <person name="Senoh A."/>
            <person name="Mizoguchi H."/>
            <person name="Goto Y."/>
            <person name="Shimizu F."/>
            <person name="Wakebe H."/>
            <person name="Hishigaki H."/>
            <person name="Watanabe T."/>
            <person name="Sugiyama A."/>
            <person name="Takemoto M."/>
            <person name="Kawakami B."/>
            <person name="Yamazaki M."/>
            <person name="Watanabe K."/>
            <person name="Kumagai A."/>
            <person name="Itakura S."/>
            <person name="Fukuzumi Y."/>
            <person name="Fujimori Y."/>
            <person name="Komiyama M."/>
            <person name="Tashiro H."/>
            <person name="Tanigami A."/>
            <person name="Fujiwara T."/>
            <person name="Ono T."/>
            <person name="Yamada K."/>
            <person name="Fujii Y."/>
            <person name="Ozaki K."/>
            <person name="Hirao M."/>
            <person name="Ohmori Y."/>
            <person name="Kawabata A."/>
            <person name="Hikiji T."/>
            <person name="Kobatake N."/>
            <person name="Inagaki H."/>
            <person name="Ikema Y."/>
            <person name="Okamoto S."/>
            <person name="Okitani R."/>
            <person name="Kawakami T."/>
            <person name="Noguchi S."/>
            <person name="Itoh T."/>
            <person name="Shigeta K."/>
            <person name="Senba T."/>
            <person name="Matsumura K."/>
            <person name="Nakajima Y."/>
            <person name="Mizuno T."/>
            <person name="Morinaga M."/>
            <person name="Sasaki M."/>
            <person name="Togashi T."/>
            <person name="Oyama M."/>
            <person name="Hata H."/>
            <person name="Watanabe M."/>
            <person name="Komatsu T."/>
            <person name="Mizushima-Sugano J."/>
            <person name="Satoh T."/>
            <person name="Shirai Y."/>
            <person name="Takahashi Y."/>
            <person name="Nakagawa K."/>
            <person name="Okumura K."/>
            <person name="Nagase T."/>
            <person name="Nomura N."/>
            <person name="Kikuchi H."/>
            <person name="Masuho Y."/>
            <person name="Yamashita R."/>
            <person name="Nakai K."/>
            <person name="Yada T."/>
            <person name="Nakamura Y."/>
            <person name="Ohara O."/>
            <person name="Isogai T."/>
            <person name="Sugano S."/>
        </authorList>
    </citation>
    <scope>NUCLEOTIDE SEQUENCE [LARGE SCALE MRNA] (ISOFORM 2)</scope>
    <source>
        <tissue>Placenta</tissue>
    </source>
</reference>
<reference key="4">
    <citation type="journal article" date="2004" name="Nature">
        <title>The DNA sequence and biology of human chromosome 19.</title>
        <authorList>
            <person name="Grimwood J."/>
            <person name="Gordon L.A."/>
            <person name="Olsen A.S."/>
            <person name="Terry A."/>
            <person name="Schmutz J."/>
            <person name="Lamerdin J.E."/>
            <person name="Hellsten U."/>
            <person name="Goodstein D."/>
            <person name="Couronne O."/>
            <person name="Tran-Gyamfi M."/>
            <person name="Aerts A."/>
            <person name="Altherr M."/>
            <person name="Ashworth L."/>
            <person name="Bajorek E."/>
            <person name="Black S."/>
            <person name="Branscomb E."/>
            <person name="Caenepeel S."/>
            <person name="Carrano A.V."/>
            <person name="Caoile C."/>
            <person name="Chan Y.M."/>
            <person name="Christensen M."/>
            <person name="Cleland C.A."/>
            <person name="Copeland A."/>
            <person name="Dalin E."/>
            <person name="Dehal P."/>
            <person name="Denys M."/>
            <person name="Detter J.C."/>
            <person name="Escobar J."/>
            <person name="Flowers D."/>
            <person name="Fotopulos D."/>
            <person name="Garcia C."/>
            <person name="Georgescu A.M."/>
            <person name="Glavina T."/>
            <person name="Gomez M."/>
            <person name="Gonzales E."/>
            <person name="Groza M."/>
            <person name="Hammon N."/>
            <person name="Hawkins T."/>
            <person name="Haydu L."/>
            <person name="Ho I."/>
            <person name="Huang W."/>
            <person name="Israni S."/>
            <person name="Jett J."/>
            <person name="Kadner K."/>
            <person name="Kimball H."/>
            <person name="Kobayashi A."/>
            <person name="Larionov V."/>
            <person name="Leem S.-H."/>
            <person name="Lopez F."/>
            <person name="Lou Y."/>
            <person name="Lowry S."/>
            <person name="Malfatti S."/>
            <person name="Martinez D."/>
            <person name="McCready P.M."/>
            <person name="Medina C."/>
            <person name="Morgan J."/>
            <person name="Nelson K."/>
            <person name="Nolan M."/>
            <person name="Ovcharenko I."/>
            <person name="Pitluck S."/>
            <person name="Pollard M."/>
            <person name="Popkie A.P."/>
            <person name="Predki P."/>
            <person name="Quan G."/>
            <person name="Ramirez L."/>
            <person name="Rash S."/>
            <person name="Retterer J."/>
            <person name="Rodriguez A."/>
            <person name="Rogers S."/>
            <person name="Salamov A."/>
            <person name="Salazar A."/>
            <person name="She X."/>
            <person name="Smith D."/>
            <person name="Slezak T."/>
            <person name="Solovyev V."/>
            <person name="Thayer N."/>
            <person name="Tice H."/>
            <person name="Tsai M."/>
            <person name="Ustaszewska A."/>
            <person name="Vo N."/>
            <person name="Wagner M."/>
            <person name="Wheeler J."/>
            <person name="Wu K."/>
            <person name="Xie G."/>
            <person name="Yang J."/>
            <person name="Dubchak I."/>
            <person name="Furey T.S."/>
            <person name="DeJong P."/>
            <person name="Dickson M."/>
            <person name="Gordon D."/>
            <person name="Eichler E.E."/>
            <person name="Pennacchio L.A."/>
            <person name="Richardson P."/>
            <person name="Stubbs L."/>
            <person name="Rokhsar D.S."/>
            <person name="Myers R.M."/>
            <person name="Rubin E.M."/>
            <person name="Lucas S.M."/>
        </authorList>
    </citation>
    <scope>NUCLEOTIDE SEQUENCE [LARGE SCALE GENOMIC DNA]</scope>
</reference>
<reference key="5">
    <citation type="submission" date="2005-09" db="EMBL/GenBank/DDBJ databases">
        <authorList>
            <person name="Mural R.J."/>
            <person name="Istrail S."/>
            <person name="Sutton G.G."/>
            <person name="Florea L."/>
            <person name="Halpern A.L."/>
            <person name="Mobarry C.M."/>
            <person name="Lippert R."/>
            <person name="Walenz B."/>
            <person name="Shatkay H."/>
            <person name="Dew I."/>
            <person name="Miller J.R."/>
            <person name="Flanigan M.J."/>
            <person name="Edwards N.J."/>
            <person name="Bolanos R."/>
            <person name="Fasulo D."/>
            <person name="Halldorsson B.V."/>
            <person name="Hannenhalli S."/>
            <person name="Turner R."/>
            <person name="Yooseph S."/>
            <person name="Lu F."/>
            <person name="Nusskern D.R."/>
            <person name="Shue B.C."/>
            <person name="Zheng X.H."/>
            <person name="Zhong F."/>
            <person name="Delcher A.L."/>
            <person name="Huson D.H."/>
            <person name="Kravitz S.A."/>
            <person name="Mouchard L."/>
            <person name="Reinert K."/>
            <person name="Remington K.A."/>
            <person name="Clark A.G."/>
            <person name="Waterman M.S."/>
            <person name="Eichler E.E."/>
            <person name="Adams M.D."/>
            <person name="Hunkapiller M.W."/>
            <person name="Myers E.W."/>
            <person name="Venter J.C."/>
        </authorList>
    </citation>
    <scope>NUCLEOTIDE SEQUENCE [LARGE SCALE GENOMIC DNA]</scope>
    <scope>VARIANTS HIS-139; ASP-259 AND GLY-439</scope>
</reference>
<reference key="6">
    <citation type="journal article" date="2004" name="Genome Res.">
        <title>The status, quality, and expansion of the NIH full-length cDNA project: the Mammalian Gene Collection (MGC).</title>
        <authorList>
            <consortium name="The MGC Project Team"/>
        </authorList>
    </citation>
    <scope>NUCLEOTIDE SEQUENCE [LARGE SCALE MRNA] (ISOFORM 1)</scope>
    <source>
        <tissue>Brain</tissue>
        <tissue>Testis</tissue>
    </source>
</reference>
<reference key="7">
    <citation type="journal article" date="2000" name="Tissue Antigens">
        <title>Genomic typing of minor histocompatibility antigen HA-1 by reference strand mediated conformation analysis (RSCA).</title>
        <authorList>
            <person name="Arostegui J.I."/>
            <person name="Gallardo D."/>
            <person name="Rodriguez-Luaces M."/>
            <person name="Querol S."/>
            <person name="Madrigal J.A."/>
            <person name="Garcia-Lopez J."/>
            <person name="Granena A."/>
        </authorList>
    </citation>
    <scope>NUCLEOTIDE SEQUENCE [GENOMIC DNA] OF 82-140</scope>
    <scope>VARIANT HIS-139</scope>
</reference>
<reference key="8">
    <citation type="journal article" date="2005" name="BMC Med. Genet.">
        <title>Sequence diversity within the HA-1 gene as detected by melting temperature assay without oligonucleotide probes.</title>
        <authorList>
            <person name="Graziano C."/>
            <person name="Giorgi M."/>
            <person name="Malentacchi C."/>
            <person name="Mattiuz P.L."/>
            <person name="Porfirio B."/>
        </authorList>
    </citation>
    <scope>NUCLEOTIDE SEQUENCE [GENOMIC DNA] OF 82-140</scope>
    <scope>VARIANT HIS-139</scope>
</reference>
<reference key="9">
    <citation type="journal article" date="1998" name="Science">
        <title>The minor histocompatibility antigen HA-1: a diallelic gene with a single amino acid polymorphism.</title>
        <authorList>
            <person name="den Haan J.M."/>
            <person name="Meadows L.M."/>
            <person name="Wang W."/>
            <person name="Pool J."/>
            <person name="Blokland E."/>
            <person name="Bishop T.L."/>
            <person name="Reinhardus C."/>
            <person name="Shabanowitz J."/>
            <person name="Offringa R."/>
            <person name="Hunt D.F."/>
            <person name="Engelhard V.H."/>
            <person name="Goulmy E."/>
        </authorList>
    </citation>
    <scope>PROTEIN SEQUENCE OF 137-145</scope>
    <scope>IDENTIFICATION BY MASS SPECTROMETRY</scope>
    <scope>VARIANT HIS-139</scope>
</reference>
<reference key="10">
    <citation type="journal article" date="1993" name="Blood">
        <title>Minor histocompatibility antigens HA-1-, -2-, and -4-, and HY-specific cytotoxic T-cell clones inhibit human hematopoietic progenitor cell growth by a mechanism that is dependent on direct cell-cell contact.</title>
        <authorList>
            <person name="Marijt W.A.F."/>
            <person name="Veenhof W.F.J."/>
            <person name="Goulmy E."/>
            <person name="Willemze R."/>
            <person name="van Rood J.J."/>
            <person name="Falkenburg J.H.F."/>
        </authorList>
    </citation>
    <scope>FUNCTION</scope>
</reference>
<reference key="11">
    <citation type="journal article" date="1996" name="N. Engl. J. Med.">
        <title>Mismatches of minor histocompatibility antigens between HLA-identical donors and recipients and the development of graft-versus-host disease after bone marrow transplantation.</title>
        <authorList>
            <person name="Goulmy E."/>
            <person name="Schipper R."/>
            <person name="Pool J."/>
            <person name="Blokland E."/>
            <person name="Falkenburg J.H."/>
            <person name="Vossen J."/>
            <person name="Gratwohl A."/>
            <person name="Vogelsang G.B."/>
            <person name="van Houwelingen H.C."/>
            <person name="van Rood J.J."/>
        </authorList>
    </citation>
    <scope>FUNCTION</scope>
</reference>
<reference key="12">
    <citation type="journal article" date="1996" name="Transpl. Immunol.">
        <title>Functional expression of minor histocompatibility antigens on human peripheral blood dendritic cells and epidermal Langerhans cells.</title>
        <authorList>
            <person name="van Lochem E."/>
            <person name="van der Keur M."/>
            <person name="Mommaas A.M."/>
            <person name="de Gast G.C."/>
            <person name="Goulmy E."/>
        </authorList>
    </citation>
    <scope>TISSUE SPECIFICITY</scope>
</reference>
<reference key="13">
    <citation type="journal article" date="1998" name="Transplantation">
        <title>HA-1 and the SMCY-derived peptide FIDSYICQV (H-Y) are immunodominant minor histocompatibility antigens after bone marrow transplantation.</title>
        <authorList>
            <person name="Rufer N."/>
            <person name="Wolpert E."/>
            <person name="Helg C."/>
            <person name="Tiercy J.-M."/>
            <person name="Gratwohl A."/>
            <person name="Chapuis B."/>
            <person name="Jeannet M."/>
            <person name="Goulmy E."/>
            <person name="Roosnek E."/>
        </authorList>
    </citation>
    <scope>FUNCTION</scope>
</reference>
<reference key="14">
    <citation type="journal article" date="2002" name="Transplantation">
        <title>Expression of minor histocompatibility antigen, HA-1, in solid tumor cells.</title>
        <authorList>
            <person name="Fujii N."/>
            <person name="Hiraki A."/>
            <person name="Ikeda K."/>
            <person name="Ohmura Y."/>
            <person name="Nozaki I."/>
            <person name="Shinagawa K."/>
            <person name="Ishimaru F."/>
            <person name="Kiura K."/>
            <person name="Shimizu N."/>
            <person name="Tanimoto M."/>
            <person name="Harada M."/>
        </authorList>
    </citation>
    <scope>TISSUE SPECIFICITY</scope>
</reference>
<reference key="15">
    <citation type="journal article" date="2003" name="Proc. Natl. Acad. Sci. U.S.A.">
        <title>Hematopoiesis-restricted minor histocompatibility antigens HA-1- or HA-2-specific T cells can induce complete remissions of relapsed leukemia.</title>
        <authorList>
            <person name="Marijt W.A.E."/>
            <person name="Heemskerk M.H.M."/>
            <person name="Kloosterboer F.M."/>
            <person name="Goulmy E."/>
            <person name="Kester M.G.D."/>
            <person name="van der Hoorn M.A.W.G."/>
            <person name="van Luxemburg-Heys S.A.P."/>
            <person name="Hoogeboom M."/>
            <person name="Mutis T."/>
            <person name="Drijfhout J.W."/>
            <person name="van Rood J.J."/>
            <person name="Willemze R."/>
            <person name="Falkenburg J.H.F."/>
        </authorList>
    </citation>
    <scope>FUNCTION</scope>
</reference>
<reference key="16">
    <citation type="journal article" date="2006" name="Nat. Biotechnol.">
        <title>A probability-based approach for high-throughput protein phosphorylation analysis and site localization.</title>
        <authorList>
            <person name="Beausoleil S.A."/>
            <person name="Villen J."/>
            <person name="Gerber S.A."/>
            <person name="Rush J."/>
            <person name="Gygi S.P."/>
        </authorList>
    </citation>
    <scope>PHOSPHORYLATION [LARGE SCALE ANALYSIS] AT SER-23 AND SER-25</scope>
    <scope>IDENTIFICATION BY MASS SPECTROMETRY [LARGE SCALE ANALYSIS]</scope>
    <source>
        <tissue>Cervix carcinoma</tissue>
    </source>
</reference>
<reference key="17">
    <citation type="journal article" date="2008" name="J. Proteome Res.">
        <title>Combining protein-based IMAC, peptide-based IMAC, and MudPIT for efficient phosphoproteomic analysis.</title>
        <authorList>
            <person name="Cantin G.T."/>
            <person name="Yi W."/>
            <person name="Lu B."/>
            <person name="Park S.K."/>
            <person name="Xu T."/>
            <person name="Lee J.-D."/>
            <person name="Yates J.R. III"/>
        </authorList>
    </citation>
    <scope>IDENTIFICATION BY MASS SPECTROMETRY [LARGE SCALE ANALYSIS]</scope>
    <source>
        <tissue>Cervix carcinoma</tissue>
    </source>
</reference>
<reference key="18">
    <citation type="journal article" date="2008" name="J. Proteome Res.">
        <title>Phosphorylation analysis of primary human T lymphocytes using sequential IMAC and titanium oxide enrichment.</title>
        <authorList>
            <person name="Carrascal M."/>
            <person name="Ovelleiro D."/>
            <person name="Casas V."/>
            <person name="Gay M."/>
            <person name="Abian J."/>
        </authorList>
    </citation>
    <scope>PHOSPHORYLATION [LARGE SCALE ANALYSIS] AT SER-99 AND SER-569</scope>
    <scope>IDENTIFICATION BY MASS SPECTROMETRY [LARGE SCALE ANALYSIS]</scope>
    <source>
        <tissue>T-cell</tissue>
    </source>
</reference>
<reference key="19">
    <citation type="journal article" date="2009" name="Sci. Signal.">
        <title>Quantitative phosphoproteomic analysis of T cell receptor signaling reveals system-wide modulation of protein-protein interactions.</title>
        <authorList>
            <person name="Mayya V."/>
            <person name="Lundgren D.H."/>
            <person name="Hwang S.-I."/>
            <person name="Rezaul K."/>
            <person name="Wu L."/>
            <person name="Eng J.K."/>
            <person name="Rodionov V."/>
            <person name="Han D.K."/>
        </authorList>
    </citation>
    <scope>PHOSPHORYLATION [LARGE SCALE ANALYSIS] AT SER-23; SER-73; SER-93; SER-99; SER-569 AND SER-619</scope>
    <scope>IDENTIFICATION BY MASS SPECTROMETRY [LARGE SCALE ANALYSIS]</scope>
    <source>
        <tissue>Leukemic T-cell</tissue>
    </source>
</reference>
<reference key="20">
    <citation type="journal article" date="2011" name="BMC Syst. Biol.">
        <title>Initial characterization of the human central proteome.</title>
        <authorList>
            <person name="Burkard T.R."/>
            <person name="Planyavsky M."/>
            <person name="Kaupe I."/>
            <person name="Breitwieser F.P."/>
            <person name="Buerckstuemmer T."/>
            <person name="Bennett K.L."/>
            <person name="Superti-Furga G."/>
            <person name="Colinge J."/>
        </authorList>
    </citation>
    <scope>IDENTIFICATION BY MASS SPECTROMETRY [LARGE SCALE ANALYSIS]</scope>
</reference>
<reference key="21">
    <citation type="journal article" date="2013" name="J. Proteome Res.">
        <title>Toward a comprehensive characterization of a human cancer cell phosphoproteome.</title>
        <authorList>
            <person name="Zhou H."/>
            <person name="Di Palma S."/>
            <person name="Preisinger C."/>
            <person name="Peng M."/>
            <person name="Polat A.N."/>
            <person name="Heck A.J."/>
            <person name="Mohammed S."/>
        </authorList>
    </citation>
    <scope>PHOSPHORYLATION [LARGE SCALE ANALYSIS] AT SER-23; SER-73; SER-569 AND SER-592</scope>
    <scope>IDENTIFICATION BY MASS SPECTROMETRY [LARGE SCALE ANALYSIS]</scope>
    <source>
        <tissue>Cervix carcinoma</tissue>
        <tissue>Erythroleukemia</tissue>
    </source>
</reference>
<reference key="22">
    <citation type="journal article" date="2013" name="PLoS ONE">
        <title>The human minor histocompatibility antigen 1 is a RhoGAP.</title>
        <authorList>
            <person name="de Kreuk B.J."/>
            <person name="Schaefer A."/>
            <person name="Anthony E.C."/>
            <person name="Tol S."/>
            <person name="Fernandez-Borja M."/>
            <person name="Geerts D."/>
            <person name="Pool J."/>
            <person name="Hambach L."/>
            <person name="Goulmy E."/>
            <person name="Hordijk P.L."/>
        </authorList>
    </citation>
    <scope>FUNCTION</scope>
    <scope>DOMAIN</scope>
    <scope>SUBCELLULAR LOCATION</scope>
</reference>
<reference key="23">
    <citation type="journal article" date="2014" name="J. Proteomics">
        <title>An enzyme assisted RP-RPLC approach for in-depth analysis of human liver phosphoproteome.</title>
        <authorList>
            <person name="Bian Y."/>
            <person name="Song C."/>
            <person name="Cheng K."/>
            <person name="Dong M."/>
            <person name="Wang F."/>
            <person name="Huang J."/>
            <person name="Sun D."/>
            <person name="Wang L."/>
            <person name="Ye M."/>
            <person name="Zou H."/>
        </authorList>
    </citation>
    <scope>PHOSPHORYLATION [LARGE SCALE ANALYSIS] AT SER-23; SER-569; SER-578; SER-619 AND SER-949</scope>
    <scope>IDENTIFICATION BY MASS SPECTROMETRY [LARGE SCALE ANALYSIS]</scope>
    <source>
        <tissue>Liver</tissue>
    </source>
</reference>
<reference key="24">
    <citation type="journal article" date="1998" name="Tissue Antigens">
        <title>Definition of the gene encoding the minor histocompatibility antigen HA-1 and typing for HA-1 from genomic DNA.</title>
        <authorList>
            <person name="Tseng L.-H."/>
            <person name="Lin M.-T."/>
            <person name="Martin P.J."/>
            <person name="Pei J."/>
            <person name="Smith A.G."/>
            <person name="Hansen J.A."/>
        </authorList>
    </citation>
    <scope>VARIANT HIS-139</scope>
</reference>
<reference key="25">
    <citation type="journal article" date="2006" name="Biol. Blood Marrow Transplant.">
        <title>Therapeutic and diagnostic applications of minor histocompatibility antigen HA-1 and HA-2 disparities in allogeneic hematopoietic stem cell transplantation: a survey of different populations.</title>
        <authorList>
            <person name="Di Terlizzi S."/>
            <person name="Zino E."/>
            <person name="Mazzi B."/>
            <person name="Magnani C."/>
            <person name="Tresoldi C."/>
            <person name="Perna S.K."/>
            <person name="Bregni M."/>
            <person name="Rossini S."/>
            <person name="Ciceri F."/>
            <person name="Bordignon C."/>
            <person name="Bonini C."/>
            <person name="Fleischhauer K."/>
        </authorList>
    </citation>
    <scope>VARIANT HIS-139</scope>
</reference>
<comment type="function">
    <text evidence="12">Contains a GTPase activator for the Rho-type GTPases (RhoGAP) domain that would be able to negatively regulate the actin cytoskeleton as well as cell spreading. However, also contains N-terminally a BAR-domin which is able to play an autoinhibitory effect on this RhoGAP activity.</text>
</comment>
<comment type="function">
    <text evidence="9 13 14 17">Precursor of the histocompatibility antigen HA-1. More generally, minor histocompatibility antigens (mHags) refer to immunogenic peptide which, when complexed with MHC, can generate an immune response after recognition by specific T-cells. The peptides are derived from polymorphic intracellular proteins, which are cleaved by normal pathways of antigen processing. The binding of these peptides to MHC class I or class II molecules and its expression on the cell surface can stimulate T-cell responses and thereby trigger graft rejection or graft-versus-host disease (GVHD) after hematopoietic stem cell transplantation from HLA-identical sibling donor. GVHD is a frequent complication after bone marrow transplantation (BMT), due to mismatch of minor histocompatibility antigen in HLA-matched sibling marrow transplants. Specifically, mismatching for mHag HA-1 which is recognized as immunodominant, is shown to be associated with the development of severe GVHD after HLA-identical BMT. HA-1 is presented to the cell surface by MHC class I HLA-A*0201, but also by other HLA-A alleles. This complex specifically elicits donor-cytotoxic T-lymphocyte (CTL) reactivity against hematologic malignancies after treatment by HLA-identical allogenic BMT. It induces cell recognition and lysis by CTL.</text>
</comment>
<comment type="subunit">
    <text>HA-1 forms a complex with MHC class I HLA-A*0201.</text>
</comment>
<comment type="interaction">
    <interactant intactId="EBI-2825900">
        <id>Q92619</id>
    </interactant>
    <interactant intactId="EBI-11975051">
        <id>Q8TD16-2</id>
        <label>BICD2</label>
    </interactant>
    <organismsDiffer>false</organismsDiffer>
    <experiments>3</experiments>
</comment>
<comment type="interaction">
    <interactant intactId="EBI-2825900">
        <id>Q92619</id>
    </interactant>
    <interactant intactId="EBI-11603420">
        <id>Q9P107</id>
        <label>GMIP</label>
    </interactant>
    <organismsDiffer>false</organismsDiffer>
    <experiments>3</experiments>
</comment>
<comment type="interaction">
    <interactant intactId="EBI-2825900">
        <id>Q92619</id>
    </interactant>
    <interactant intactId="EBI-618309">
        <id>Q08379</id>
        <label>GOLGA2</label>
    </interactant>
    <organismsDiffer>false</organismsDiffer>
    <experiments>3</experiments>
</comment>
<comment type="interaction">
    <interactant intactId="EBI-2825900">
        <id>Q92619</id>
    </interactant>
    <interactant intactId="EBI-7116203">
        <id>O75031</id>
        <label>HSF2BP</label>
    </interactant>
    <organismsDiffer>false</organismsDiffer>
    <experiments>3</experiments>
</comment>
<comment type="interaction">
    <interactant intactId="EBI-2825900">
        <id>Q92619</id>
    </interactant>
    <interactant intactId="EBI-9640281">
        <id>Q5VU43-2</id>
        <label>PDE4DIP</label>
    </interactant>
    <organismsDiffer>false</organismsDiffer>
    <experiments>3</experiments>
</comment>
<comment type="interaction">
    <interactant intactId="EBI-2825900">
        <id>Q92619</id>
    </interactant>
    <interactant intactId="EBI-14066006">
        <id>Q4G0R1</id>
        <label>PIBF1</label>
    </interactant>
    <organismsDiffer>false</organismsDiffer>
    <experiments>3</experiments>
</comment>
<comment type="interaction">
    <interactant intactId="EBI-2825900">
        <id>Q92619</id>
    </interactant>
    <interactant intactId="EBI-1105153">
        <id>Q96KQ4</id>
        <label>PPP1R13B</label>
    </interactant>
    <organismsDiffer>false</organismsDiffer>
    <experiments>3</experiments>
</comment>
<comment type="interaction">
    <interactant intactId="EBI-2825900">
        <id>Q92619</id>
    </interactant>
    <interactant intactId="EBI-413628">
        <id>P63000</id>
        <label>RAC1</label>
    </interactant>
    <organismsDiffer>false</organismsDiffer>
    <experiments>3</experiments>
</comment>
<comment type="interaction">
    <interactant intactId="EBI-2825900">
        <id>Q92619</id>
    </interactant>
    <interactant intactId="EBI-726876">
        <id>Q6NUQ1</id>
        <label>RINT1</label>
    </interactant>
    <organismsDiffer>false</organismsDiffer>
    <experiments>5</experiments>
</comment>
<comment type="interaction">
    <interactant intactId="EBI-2825900">
        <id>Q92619</id>
    </interactant>
    <interactant intactId="EBI-11952721">
        <id>Q05BL1</id>
        <label>TP53BP2</label>
    </interactant>
    <organismsDiffer>false</organismsDiffer>
    <experiments>3</experiments>
</comment>
<comment type="interaction">
    <interactant intactId="EBI-2825900">
        <id>Q92619</id>
    </interactant>
    <interactant intactId="EBI-9867283">
        <id>Q86XT4</id>
        <label>TRIM50</label>
    </interactant>
    <organismsDiffer>false</organismsDiffer>
    <experiments>3</experiments>
</comment>
<comment type="interaction">
    <interactant intactId="EBI-2825900">
        <id>Q92619</id>
    </interactant>
    <interactant intactId="EBI-744706">
        <id>Q96AP4</id>
        <label>ZUP1</label>
    </interactant>
    <organismsDiffer>false</organismsDiffer>
    <experiments>3</experiments>
</comment>
<comment type="subcellular location">
    <subcellularLocation>
        <location evidence="12">Cytoplasm</location>
    </subcellularLocation>
    <subcellularLocation>
        <location evidence="12">Cell projection</location>
        <location evidence="12">Ruffle membrane</location>
    </subcellularLocation>
</comment>
<comment type="alternative products">
    <event type="alternative splicing"/>
    <isoform>
        <id>Q92619-1</id>
        <name>1</name>
        <sequence type="displayed"/>
    </isoform>
    <isoform>
        <id>Q92619-2</id>
        <name>2</name>
        <sequence type="described" ref="VSP_044707"/>
    </isoform>
</comment>
<comment type="tissue specificity">
    <text evidence="8 15">Expressed on cells of the hematopoietic lineage. Detected in dendritic cells and epidermal Langerhans cells. Expressed in peripheral blood mononuclear cells, in all leukemia/lymphoma cell lines. Detected also in some solid tumors and tissues such as cancerous and non-cancerous tissue.</text>
</comment>
<comment type="domain">
    <text evidence="12">Rho-GAP domain is able to regulate RhoGTPase activity, actin cytoskeleton and cell spreading. However N-terminally BAR domain plays an autoinhibitory role.</text>
</comment>
<comment type="polymorphism">
    <text evidence="11 18">The HA-1H allele is presented on the cell surface and recognized by CTL, whereas the HA-1R allele is poorly represented by HLA-A and non-immunogenic, although HA-1R allelic frequency is the highest (PubMed:16399573, PubMed:9820595).</text>
</comment>
<comment type="miscellaneous">
    <text>Infusion of lymphocyte from mHag HA-1-negative donors results in a durable remission in mHag HA-1-positive patients with leukemia or multiple myeloma.</text>
</comment>
<comment type="sequence caution" evidence="21">
    <conflict type="erroneous initiation">
        <sequence resource="EMBL-CDS" id="BAA13212"/>
    </conflict>
    <text>Extended N-terminus.</text>
</comment>
<protein>
    <recommendedName>
        <fullName evidence="22">Rho GTPase-activating protein 45</fullName>
    </recommendedName>
    <component>
        <recommendedName>
            <fullName>Minor histocompatibility antigen HA-1</fullName>
            <shortName>mHag HA-1</shortName>
        </recommendedName>
    </component>
</protein>